<keyword id="KW-1267">Proteomics identification</keyword>
<keyword id="KW-1185">Reference proteome</keyword>
<proteinExistence type="evidence at protein level"/>
<name>CQ100_HUMAN</name>
<gene>
    <name evidence="3" type="primary">C17orf100</name>
</gene>
<organism>
    <name type="scientific">Homo sapiens</name>
    <name type="common">Human</name>
    <dbReference type="NCBI Taxonomy" id="9606"/>
    <lineage>
        <taxon>Eukaryota</taxon>
        <taxon>Metazoa</taxon>
        <taxon>Chordata</taxon>
        <taxon>Craniata</taxon>
        <taxon>Vertebrata</taxon>
        <taxon>Euteleostomi</taxon>
        <taxon>Mammalia</taxon>
        <taxon>Eutheria</taxon>
        <taxon>Euarchontoglires</taxon>
        <taxon>Primates</taxon>
        <taxon>Haplorrhini</taxon>
        <taxon>Catarrhini</taxon>
        <taxon>Hominidae</taxon>
        <taxon>Homo</taxon>
    </lineage>
</organism>
<sequence length="118" mass="13000">MASARGAKQSSPRVGTTRYTETSTVRVETSSHRVETSSRRVETSQRRSEGPSLSPSGKRLPRILEASSRHVESSSQRTETTSRHVRASSLRVETSLHCAESPTPRAKPAARQNEKTAR</sequence>
<evidence type="ECO:0000256" key="1">
    <source>
        <dbReference type="SAM" id="MobiDB-lite"/>
    </source>
</evidence>
<evidence type="ECO:0000305" key="2"/>
<evidence type="ECO:0000312" key="3">
    <source>
        <dbReference type="HGNC" id="HGNC:34494"/>
    </source>
</evidence>
<accession>A8MU93</accession>
<accession>D3DTM5</accession>
<feature type="chain" id="PRO_0000340708" description="Uncharacterized protein C17orf100">
    <location>
        <begin position="1"/>
        <end position="118"/>
    </location>
</feature>
<feature type="region of interest" description="Disordered" evidence="1">
    <location>
        <begin position="1"/>
        <end position="118"/>
    </location>
</feature>
<feature type="compositionally biased region" description="Low complexity" evidence="1">
    <location>
        <begin position="13"/>
        <end position="28"/>
    </location>
</feature>
<feature type="compositionally biased region" description="Basic and acidic residues" evidence="1">
    <location>
        <begin position="29"/>
        <end position="49"/>
    </location>
</feature>
<reference key="1">
    <citation type="journal article" date="2006" name="Nature">
        <title>DNA sequence of human chromosome 17 and analysis of rearrangement in the human lineage.</title>
        <authorList>
            <person name="Zody M.C."/>
            <person name="Garber M."/>
            <person name="Adams D.J."/>
            <person name="Sharpe T."/>
            <person name="Harrow J."/>
            <person name="Lupski J.R."/>
            <person name="Nicholson C."/>
            <person name="Searle S.M."/>
            <person name="Wilming L."/>
            <person name="Young S.K."/>
            <person name="Abouelleil A."/>
            <person name="Allen N.R."/>
            <person name="Bi W."/>
            <person name="Bloom T."/>
            <person name="Borowsky M.L."/>
            <person name="Bugalter B.E."/>
            <person name="Butler J."/>
            <person name="Chang J.L."/>
            <person name="Chen C.-K."/>
            <person name="Cook A."/>
            <person name="Corum B."/>
            <person name="Cuomo C.A."/>
            <person name="de Jong P.J."/>
            <person name="DeCaprio D."/>
            <person name="Dewar K."/>
            <person name="FitzGerald M."/>
            <person name="Gilbert J."/>
            <person name="Gibson R."/>
            <person name="Gnerre S."/>
            <person name="Goldstein S."/>
            <person name="Grafham D.V."/>
            <person name="Grocock R."/>
            <person name="Hafez N."/>
            <person name="Hagopian D.S."/>
            <person name="Hart E."/>
            <person name="Norman C.H."/>
            <person name="Humphray S."/>
            <person name="Jaffe D.B."/>
            <person name="Jones M."/>
            <person name="Kamal M."/>
            <person name="Khodiyar V.K."/>
            <person name="LaButti K."/>
            <person name="Laird G."/>
            <person name="Lehoczky J."/>
            <person name="Liu X."/>
            <person name="Lokyitsang T."/>
            <person name="Loveland J."/>
            <person name="Lui A."/>
            <person name="Macdonald P."/>
            <person name="Major J.E."/>
            <person name="Matthews L."/>
            <person name="Mauceli E."/>
            <person name="McCarroll S.A."/>
            <person name="Mihalev A.H."/>
            <person name="Mudge J."/>
            <person name="Nguyen C."/>
            <person name="Nicol R."/>
            <person name="O'Leary S.B."/>
            <person name="Osoegawa K."/>
            <person name="Schwartz D.C."/>
            <person name="Shaw-Smith C."/>
            <person name="Stankiewicz P."/>
            <person name="Steward C."/>
            <person name="Swarbreck D."/>
            <person name="Venkataraman V."/>
            <person name="Whittaker C.A."/>
            <person name="Yang X."/>
            <person name="Zimmer A.R."/>
            <person name="Bradley A."/>
            <person name="Hubbard T."/>
            <person name="Birren B.W."/>
            <person name="Rogers J."/>
            <person name="Lander E.S."/>
            <person name="Nusbaum C."/>
        </authorList>
    </citation>
    <scope>NUCLEOTIDE SEQUENCE [LARGE SCALE GENOMIC DNA]</scope>
</reference>
<reference key="2">
    <citation type="submission" date="2005-09" db="EMBL/GenBank/DDBJ databases">
        <authorList>
            <person name="Mural R.J."/>
            <person name="Istrail S."/>
            <person name="Sutton G.G."/>
            <person name="Florea L."/>
            <person name="Halpern A.L."/>
            <person name="Mobarry C.M."/>
            <person name="Lippert R."/>
            <person name="Walenz B."/>
            <person name="Shatkay H."/>
            <person name="Dew I."/>
            <person name="Miller J.R."/>
            <person name="Flanigan M.J."/>
            <person name="Edwards N.J."/>
            <person name="Bolanos R."/>
            <person name="Fasulo D."/>
            <person name="Halldorsson B.V."/>
            <person name="Hannenhalli S."/>
            <person name="Turner R."/>
            <person name="Yooseph S."/>
            <person name="Lu F."/>
            <person name="Nusskern D.R."/>
            <person name="Shue B.C."/>
            <person name="Zheng X.H."/>
            <person name="Zhong F."/>
            <person name="Delcher A.L."/>
            <person name="Huson D.H."/>
            <person name="Kravitz S.A."/>
            <person name="Mouchard L."/>
            <person name="Reinert K."/>
            <person name="Remington K.A."/>
            <person name="Clark A.G."/>
            <person name="Waterman M.S."/>
            <person name="Eichler E.E."/>
            <person name="Adams M.D."/>
            <person name="Hunkapiller M.W."/>
            <person name="Myers E.W."/>
            <person name="Venter J.C."/>
        </authorList>
    </citation>
    <scope>NUCLEOTIDE SEQUENCE [LARGE SCALE GENOMIC DNA]</scope>
</reference>
<reference key="3">
    <citation type="journal article" date="2004" name="Genome Res.">
        <title>The status, quality, and expansion of the NIH full-length cDNA project: the Mammalian Gene Collection (MGC).</title>
        <authorList>
            <consortium name="The MGC Project Team"/>
        </authorList>
    </citation>
    <scope>NUCLEOTIDE SEQUENCE [LARGE SCALE MRNA]</scope>
</reference>
<protein>
    <recommendedName>
        <fullName evidence="2">Uncharacterized protein C17orf100</fullName>
    </recommendedName>
</protein>
<dbReference type="EMBL" id="AC004706">
    <property type="status" value="NOT_ANNOTATED_CDS"/>
    <property type="molecule type" value="Genomic_DNA"/>
</dbReference>
<dbReference type="EMBL" id="KF573667">
    <property type="status" value="NOT_ANNOTATED_CDS"/>
    <property type="molecule type" value="Genomic_DNA"/>
</dbReference>
<dbReference type="EMBL" id="CH471108">
    <property type="protein sequence ID" value="EAW90297.1"/>
    <property type="molecule type" value="Genomic_DNA"/>
</dbReference>
<dbReference type="EMBL" id="CH471108">
    <property type="protein sequence ID" value="EAW90298.1"/>
    <property type="molecule type" value="Genomic_DNA"/>
</dbReference>
<dbReference type="EMBL" id="BC038956">
    <property type="status" value="NOT_ANNOTATED_CDS"/>
    <property type="molecule type" value="mRNA"/>
</dbReference>
<dbReference type="CCDS" id="CCDS73952.1"/>
<dbReference type="RefSeq" id="NP_001098990.1">
    <property type="nucleotide sequence ID" value="NM_001105520.2"/>
</dbReference>
<dbReference type="GlyGen" id="A8MU93">
    <property type="glycosylation" value="1 site"/>
</dbReference>
<dbReference type="iPTMnet" id="A8MU93"/>
<dbReference type="PhosphoSitePlus" id="A8MU93"/>
<dbReference type="BioMuta" id="C17orf100"/>
<dbReference type="jPOST" id="A8MU93"/>
<dbReference type="MassIVE" id="A8MU93"/>
<dbReference type="PaxDb" id="9606-ENSP00000485561"/>
<dbReference type="PeptideAtlas" id="A8MU93"/>
<dbReference type="ProteomicsDB" id="2088"/>
<dbReference type="Pumba" id="A8MU93"/>
<dbReference type="Antibodypedia" id="79276">
    <property type="antibodies" value="3 antibodies from 3 providers"/>
</dbReference>
<dbReference type="DNASU" id="388327"/>
<dbReference type="Ensembl" id="ENST00000542475.3">
    <property type="protein sequence ID" value="ENSP00000491070.1"/>
    <property type="gene ID" value="ENSG00000256806.6"/>
</dbReference>
<dbReference type="Ensembl" id="ENST00000635042.1">
    <property type="protein sequence ID" value="ENSP00000491523.1"/>
    <property type="gene ID" value="ENSG00000256806.6"/>
</dbReference>
<dbReference type="GeneID" id="388327"/>
<dbReference type="KEGG" id="hsa:388327"/>
<dbReference type="MANE-Select" id="ENST00000542475.3">
    <property type="protein sequence ID" value="ENSP00000491070.1"/>
    <property type="RefSeq nucleotide sequence ID" value="NM_001105520.2"/>
    <property type="RefSeq protein sequence ID" value="NP_001098990.1"/>
</dbReference>
<dbReference type="UCSC" id="uc060aey.1">
    <property type="organism name" value="human"/>
</dbReference>
<dbReference type="AGR" id="HGNC:34494"/>
<dbReference type="CTD" id="388327"/>
<dbReference type="DisGeNET" id="388327"/>
<dbReference type="GeneCards" id="C17orf100"/>
<dbReference type="HGNC" id="HGNC:34494">
    <property type="gene designation" value="C17orf100"/>
</dbReference>
<dbReference type="HPA" id="ENSG00000256806">
    <property type="expression patterns" value="Low tissue specificity"/>
</dbReference>
<dbReference type="neXtProt" id="NX_A8MU93"/>
<dbReference type="VEuPathDB" id="HostDB:ENSG00000256806"/>
<dbReference type="eggNOG" id="ENOG502TE5V">
    <property type="taxonomic scope" value="Eukaryota"/>
</dbReference>
<dbReference type="GeneTree" id="ENSGT00390000000359"/>
<dbReference type="InParanoid" id="A8MU93"/>
<dbReference type="OMA" id="TSERRCE"/>
<dbReference type="OrthoDB" id="9629353at2759"/>
<dbReference type="PAN-GO" id="A8MU93">
    <property type="GO annotations" value="0 GO annotations based on evolutionary models"/>
</dbReference>
<dbReference type="PhylomeDB" id="A8MU93"/>
<dbReference type="TreeFam" id="TF338155"/>
<dbReference type="PathwayCommons" id="A8MU93"/>
<dbReference type="BioGRID-ORCS" id="388327">
    <property type="hits" value="26 hits in 379 CRISPR screens"/>
</dbReference>
<dbReference type="GenomeRNAi" id="388327"/>
<dbReference type="Pharos" id="A8MU93">
    <property type="development level" value="Tdark"/>
</dbReference>
<dbReference type="PRO" id="PR:A8MU93"/>
<dbReference type="Proteomes" id="UP000005640">
    <property type="component" value="Chromosome 17"/>
</dbReference>
<dbReference type="RNAct" id="A8MU93">
    <property type="molecule type" value="protein"/>
</dbReference>
<dbReference type="Bgee" id="ENSG00000256806">
    <property type="expression patterns" value="Expressed in right lobe of liver and 150 other cell types or tissues"/>
</dbReference>
<dbReference type="ExpressionAtlas" id="A8MU93">
    <property type="expression patterns" value="baseline and differential"/>
</dbReference>